<protein>
    <recommendedName>
        <fullName>Protein DIA1</fullName>
    </recommendedName>
    <alternativeName>
        <fullName>Digs into agar protein 1</fullName>
    </alternativeName>
</protein>
<name>DIA1_YEAST</name>
<gene>
    <name type="primary">DIA1</name>
    <name type="ordered locus">YMR316W</name>
    <name type="ORF">YM9924.08</name>
</gene>
<keyword id="KW-0963">Cytoplasm</keyword>
<keyword id="KW-1185">Reference proteome</keyword>
<accession>P54005</accession>
<accession>D6W0E4</accession>
<reference key="1">
    <citation type="journal article" date="1997" name="Nature">
        <title>The nucleotide sequence of Saccharomyces cerevisiae chromosome XIII.</title>
        <authorList>
            <person name="Bowman S."/>
            <person name="Churcher C.M."/>
            <person name="Badcock K."/>
            <person name="Brown D."/>
            <person name="Chillingworth T."/>
            <person name="Connor R."/>
            <person name="Dedman K."/>
            <person name="Devlin K."/>
            <person name="Gentles S."/>
            <person name="Hamlin N."/>
            <person name="Hunt S."/>
            <person name="Jagels K."/>
            <person name="Lye G."/>
            <person name="Moule S."/>
            <person name="Odell C."/>
            <person name="Pearson D."/>
            <person name="Rajandream M.A."/>
            <person name="Rice P."/>
            <person name="Skelton J."/>
            <person name="Walsh S.V."/>
            <person name="Whitehead S."/>
            <person name="Barrell B.G."/>
        </authorList>
    </citation>
    <scope>NUCLEOTIDE SEQUENCE [LARGE SCALE GENOMIC DNA]</scope>
    <source>
        <strain>ATCC 204508 / S288c</strain>
    </source>
</reference>
<reference key="2">
    <citation type="journal article" date="2014" name="G3 (Bethesda)">
        <title>The reference genome sequence of Saccharomyces cerevisiae: Then and now.</title>
        <authorList>
            <person name="Engel S.R."/>
            <person name="Dietrich F.S."/>
            <person name="Fisk D.G."/>
            <person name="Binkley G."/>
            <person name="Balakrishnan R."/>
            <person name="Costanzo M.C."/>
            <person name="Dwight S.S."/>
            <person name="Hitz B.C."/>
            <person name="Karra K."/>
            <person name="Nash R.S."/>
            <person name="Weng S."/>
            <person name="Wong E.D."/>
            <person name="Lloyd P."/>
            <person name="Skrzypek M.S."/>
            <person name="Miyasato S.R."/>
            <person name="Simison M."/>
            <person name="Cherry J.M."/>
        </authorList>
    </citation>
    <scope>GENOME REANNOTATION</scope>
    <source>
        <strain>ATCC 204508 / S288c</strain>
    </source>
</reference>
<reference key="3">
    <citation type="journal article" date="2000" name="Genetics">
        <title>Genetic analysis reveals that FLO11 upregulation and cell polarization independently regulate invasive growth in Saccharomyces cerevisiae.</title>
        <authorList>
            <person name="Palecek S.P."/>
            <person name="Parikh A.S."/>
            <person name="Kron S.J."/>
        </authorList>
    </citation>
    <scope>FUNCTION</scope>
</reference>
<reference key="4">
    <citation type="journal article" date="2003" name="Nature">
        <title>Global analysis of protein expression in yeast.</title>
        <authorList>
            <person name="Ghaemmaghami S."/>
            <person name="Huh W.-K."/>
            <person name="Bower K."/>
            <person name="Howson R.W."/>
            <person name="Belle A."/>
            <person name="Dephoure N."/>
            <person name="O'Shea E.K."/>
            <person name="Weissman J.S."/>
        </authorList>
    </citation>
    <scope>LEVEL OF PROTEIN EXPRESSION [LARGE SCALE ANALYSIS]</scope>
</reference>
<reference key="5">
    <citation type="journal article" date="2003" name="Nature">
        <title>Global analysis of protein localization in budding yeast.</title>
        <authorList>
            <person name="Huh W.-K."/>
            <person name="Falvo J.V."/>
            <person name="Gerke L.C."/>
            <person name="Carroll A.S."/>
            <person name="Howson R.W."/>
            <person name="Weissman J.S."/>
            <person name="O'Shea E.K."/>
        </authorList>
    </citation>
    <scope>SUBCELLULAR LOCATION [LARGE SCALE ANALYSIS]</scope>
</reference>
<evidence type="ECO:0000269" key="1">
    <source>
    </source>
</evidence>
<evidence type="ECO:0000269" key="2">
    <source>
    </source>
</evidence>
<evidence type="ECO:0000269" key="3">
    <source>
    </source>
</evidence>
<sequence length="336" mass="38760">MGSISRYLLKKAADGLKDEQRLKIEMSDSKSVPECFHFNRERRMPIAEINGEDGFFMFPSQQSLENFENTKKYSNELSPDAIGIPLFQIINCTLPFGKRGHSNTVVGNVPYYKIFKFILRTADEPPPYTVAKIVCSNNGLILYKVPLYDIYKNVSQANVTYSFVGTTSTEPNLLAMAHREGHRDLDTKVNNLNLRWHVTYSPVVTNDHYKLILLADYEVNRLDEDVIRAAKNKMSIDQKDQKVQRFVAAHYTREFETSLFRWVAQEGHLILGEYSTDQGSFGLNNIPPLTEELGCQSLLIHYIEYMKRQRKKIAKEARRQNKRNVANTTNMNMNLM</sequence>
<comment type="function">
    <text evidence="1">Involved in regulation of invasive growth.</text>
</comment>
<comment type="interaction">
    <interactant intactId="EBI-27668">
        <id>P54005</id>
    </interactant>
    <interactant intactId="EBI-16219">
        <id>P39940</id>
        <label>RSP5</label>
    </interactant>
    <organismsDiffer>false</organismsDiffer>
    <experiments>3</experiments>
</comment>
<comment type="subcellular location">
    <subcellularLocation>
        <location evidence="2">Cytoplasm</location>
    </subcellularLocation>
</comment>
<comment type="miscellaneous">
    <text evidence="3">Present with 736 molecules/cell in log phase SD medium.</text>
</comment>
<organism>
    <name type="scientific">Saccharomyces cerevisiae (strain ATCC 204508 / S288c)</name>
    <name type="common">Baker's yeast</name>
    <dbReference type="NCBI Taxonomy" id="559292"/>
    <lineage>
        <taxon>Eukaryota</taxon>
        <taxon>Fungi</taxon>
        <taxon>Dikarya</taxon>
        <taxon>Ascomycota</taxon>
        <taxon>Saccharomycotina</taxon>
        <taxon>Saccharomycetes</taxon>
        <taxon>Saccharomycetales</taxon>
        <taxon>Saccharomycetaceae</taxon>
        <taxon>Saccharomyces</taxon>
    </lineage>
</organism>
<dbReference type="EMBL" id="Z54141">
    <property type="protein sequence ID" value="CAA90834.1"/>
    <property type="molecule type" value="Genomic_DNA"/>
</dbReference>
<dbReference type="EMBL" id="BK006946">
    <property type="protein sequence ID" value="DAA10218.1"/>
    <property type="molecule type" value="Genomic_DNA"/>
</dbReference>
<dbReference type="PIR" id="S59309">
    <property type="entry name" value="S59309"/>
</dbReference>
<dbReference type="RefSeq" id="NP_014047.1">
    <property type="nucleotide sequence ID" value="NM_001182829.1"/>
</dbReference>
<dbReference type="BioGRID" id="35496">
    <property type="interactions" value="142"/>
</dbReference>
<dbReference type="DIP" id="DIP-4389N"/>
<dbReference type="FunCoup" id="P54005">
    <property type="interactions" value="84"/>
</dbReference>
<dbReference type="IntAct" id="P54005">
    <property type="interactions" value="11"/>
</dbReference>
<dbReference type="STRING" id="4932.YMR316W"/>
<dbReference type="iPTMnet" id="P54005"/>
<dbReference type="PaxDb" id="4932-YMR316W"/>
<dbReference type="PeptideAtlas" id="P54005"/>
<dbReference type="EnsemblFungi" id="YMR316W_mRNA">
    <property type="protein sequence ID" value="YMR316W"/>
    <property type="gene ID" value="YMR316W"/>
</dbReference>
<dbReference type="GeneID" id="855364"/>
<dbReference type="KEGG" id="sce:YMR316W"/>
<dbReference type="AGR" id="SGD:S000004935"/>
<dbReference type="SGD" id="S000004935">
    <property type="gene designation" value="DIA1"/>
</dbReference>
<dbReference type="VEuPathDB" id="FungiDB:YMR316W"/>
<dbReference type="eggNOG" id="ENOG502S58H">
    <property type="taxonomic scope" value="Eukaryota"/>
</dbReference>
<dbReference type="GeneTree" id="ENSGT00940000176746"/>
<dbReference type="HOGENOM" id="CLU_065220_0_0_1"/>
<dbReference type="InParanoid" id="P54005"/>
<dbReference type="OMA" id="LLIHYIE"/>
<dbReference type="OrthoDB" id="4038366at2759"/>
<dbReference type="BioCyc" id="YEAST:G3O-32981-MONOMER"/>
<dbReference type="BioGRID-ORCS" id="855364">
    <property type="hits" value="0 hits in 10 CRISPR screens"/>
</dbReference>
<dbReference type="PRO" id="PR:P54005"/>
<dbReference type="Proteomes" id="UP000002311">
    <property type="component" value="Chromosome XIII"/>
</dbReference>
<dbReference type="RNAct" id="P54005">
    <property type="molecule type" value="protein"/>
</dbReference>
<dbReference type="GO" id="GO:0005737">
    <property type="term" value="C:cytoplasm"/>
    <property type="evidence" value="ECO:0007005"/>
    <property type="project" value="SGD"/>
</dbReference>
<dbReference type="GO" id="GO:0001403">
    <property type="term" value="P:invasive growth in response to glucose limitation"/>
    <property type="evidence" value="ECO:0000316"/>
    <property type="project" value="SGD"/>
</dbReference>
<dbReference type="GO" id="GO:0007124">
    <property type="term" value="P:pseudohyphal growth"/>
    <property type="evidence" value="ECO:0000315"/>
    <property type="project" value="SGD"/>
</dbReference>
<proteinExistence type="evidence at protein level"/>
<feature type="chain" id="PRO_0000203358" description="Protein DIA1">
    <location>
        <begin position="1"/>
        <end position="336"/>
    </location>
</feature>